<organism>
    <name type="scientific">Mus musculus</name>
    <name type="common">Mouse</name>
    <dbReference type="NCBI Taxonomy" id="10090"/>
    <lineage>
        <taxon>Eukaryota</taxon>
        <taxon>Metazoa</taxon>
        <taxon>Chordata</taxon>
        <taxon>Craniata</taxon>
        <taxon>Vertebrata</taxon>
        <taxon>Euteleostomi</taxon>
        <taxon>Mammalia</taxon>
        <taxon>Eutheria</taxon>
        <taxon>Euarchontoglires</taxon>
        <taxon>Glires</taxon>
        <taxon>Rodentia</taxon>
        <taxon>Myomorpha</taxon>
        <taxon>Muroidea</taxon>
        <taxon>Muridae</taxon>
        <taxon>Murinae</taxon>
        <taxon>Mus</taxon>
        <taxon>Mus</taxon>
    </lineage>
</organism>
<reference key="1">
    <citation type="journal article" date="2000" name="Biochem. Biophys. Res. Commun.">
        <title>Doc2g, a third isoform of double C2 protein, lacking calcium-dependent phospholipid binding activity.</title>
        <authorList>
            <person name="Fukuda M."/>
            <person name="Mikoshiba K."/>
        </authorList>
    </citation>
    <scope>NUCLEOTIDE SEQUENCE [MRNA]</scope>
    <source>
        <strain>BALB/cJ</strain>
        <tissue>Brain</tissue>
    </source>
</reference>
<reference key="2">
    <citation type="journal article" date="2004" name="Genome Res.">
        <title>The status, quality, and expansion of the NIH full-length cDNA project: the Mammalian Gene Collection (MGC).</title>
        <authorList>
            <consortium name="The MGC Project Team"/>
        </authorList>
    </citation>
    <scope>NUCLEOTIDE SEQUENCE [LARGE SCALE MRNA]</scope>
    <source>
        <tissue>Heart</tissue>
        <tissue>Lung</tissue>
    </source>
</reference>
<sequence length="387" mass="43347">MACAGPASGRHGVSMQEHMAIDVSPGPIRPIRLISNYFPHFYPFLEPVLRAPDRQAMLAPAIPSAPQLQPNPEPEGDSDDSTALGTLEFTLLFDEDNSALHCTAHRAKGLKPPAAGSVDTYVKANLLPGASKASQLRTRTVRGTREPVWEETLTYHGFTCQDAGRKTLRLCVCEDSRLRRRRRGPPLGELRVPLRKLVPNRARSFDICLEKRKLTKRPKSLDTARGMSLYEEEEVEAEVFGEERGRILLSLCYSSERGGLLVGVLRCVHLAPMDANGYSDPFVRLFLHPSSGKKSKYKTSVRRKTLNPEFNEEFFYAGHREELAQKALLVSVWDYDLGTADDFIGGVQLSGRASGERLRHWRECLGHCDHRLELWHLLDSVPPQLGD</sequence>
<keyword id="KW-0106">Calcium</keyword>
<keyword id="KW-0479">Metal-binding</keyword>
<keyword id="KW-1185">Reference proteome</keyword>
<keyword id="KW-0677">Repeat</keyword>
<proteinExistence type="evidence at transcript level"/>
<evidence type="ECO:0000255" key="1">
    <source>
        <dbReference type="PROSITE-ProRule" id="PRU00041"/>
    </source>
</evidence>
<evidence type="ECO:0000305" key="2"/>
<gene>
    <name type="primary">Doc2g</name>
</gene>
<feature type="chain" id="PRO_0000079971" description="Double C2-like domain-containing protein gamma">
    <location>
        <begin position="1"/>
        <end position="387"/>
    </location>
</feature>
<feature type="domain" description="C2 1" evidence="1">
    <location>
        <begin position="83"/>
        <end position="209"/>
    </location>
</feature>
<feature type="domain" description="C2 2" evidence="1">
    <location>
        <begin position="243"/>
        <end position="376"/>
    </location>
</feature>
<feature type="binding site" evidence="1">
    <location>
        <position position="274"/>
    </location>
    <ligand>
        <name>Ca(2+)</name>
        <dbReference type="ChEBI" id="CHEBI:29108"/>
        <label>1</label>
    </ligand>
</feature>
<feature type="binding site" evidence="1">
    <location>
        <position position="274"/>
    </location>
    <ligand>
        <name>Ca(2+)</name>
        <dbReference type="ChEBI" id="CHEBI:29108"/>
        <label>2</label>
    </ligand>
</feature>
<feature type="binding site" evidence="1">
    <location>
        <position position="280"/>
    </location>
    <ligand>
        <name>Ca(2+)</name>
        <dbReference type="ChEBI" id="CHEBI:29108"/>
        <label>1</label>
    </ligand>
</feature>
<feature type="binding site" evidence="1">
    <location>
        <position position="334"/>
    </location>
    <ligand>
        <name>Ca(2+)</name>
        <dbReference type="ChEBI" id="CHEBI:29108"/>
        <label>1</label>
    </ligand>
</feature>
<feature type="binding site" evidence="1">
    <location>
        <position position="334"/>
    </location>
    <ligand>
        <name>Ca(2+)</name>
        <dbReference type="ChEBI" id="CHEBI:29108"/>
        <label>2</label>
    </ligand>
</feature>
<feature type="binding site" evidence="1">
    <location>
        <position position="336"/>
    </location>
    <ligand>
        <name>Ca(2+)</name>
        <dbReference type="ChEBI" id="CHEBI:29108"/>
        <label>1</label>
    </ligand>
</feature>
<feature type="binding site" evidence="1">
    <location>
        <position position="336"/>
    </location>
    <ligand>
        <name>Ca(2+)</name>
        <dbReference type="ChEBI" id="CHEBI:29108"/>
        <label>2</label>
    </ligand>
</feature>
<feature type="binding site" evidence="1">
    <location>
        <position position="342"/>
    </location>
    <ligand>
        <name>Ca(2+)</name>
        <dbReference type="ChEBI" id="CHEBI:29108"/>
        <label>2</label>
    </ligand>
</feature>
<feature type="sequence conflict" description="In Ref. 2; AAH61104." evidence="2" ref="2">
    <original>HG</original>
    <variation>QR</variation>
    <location>
        <begin position="11"/>
        <end position="12"/>
    </location>
</feature>
<feature type="sequence conflict" description="In Ref. 2; AAH61104." evidence="2" ref="2">
    <original>V</original>
    <variation>M</variation>
    <location>
        <position position="235"/>
    </location>
</feature>
<comment type="function">
    <text>May be involved in regulation of vesicular trafficking. In vitro, does not bind calcium and phospholipids.</text>
</comment>
<comment type="cofactor">
    <cofactor evidence="1">
        <name>Ca(2+)</name>
        <dbReference type="ChEBI" id="CHEBI:29108"/>
    </cofactor>
</comment>
<protein>
    <recommendedName>
        <fullName>Double C2-like domain-containing protein gamma</fullName>
        <shortName>Doc2-gamma</shortName>
    </recommendedName>
</protein>
<dbReference type="EMBL" id="AB046665">
    <property type="protein sequence ID" value="BAB16686.1"/>
    <property type="molecule type" value="mRNA"/>
</dbReference>
<dbReference type="EMBL" id="BC061104">
    <property type="protein sequence ID" value="AAH61104.1"/>
    <property type="molecule type" value="mRNA"/>
</dbReference>
<dbReference type="CCDS" id="CCDS29409.1"/>
<dbReference type="PIR" id="JC7398">
    <property type="entry name" value="JC7398"/>
</dbReference>
<dbReference type="RefSeq" id="NP_068563.2">
    <property type="nucleotide sequence ID" value="NM_021791.3"/>
</dbReference>
<dbReference type="SMR" id="Q9ESN1"/>
<dbReference type="STRING" id="10090.ENSMUSP00000025806"/>
<dbReference type="iPTMnet" id="Q9ESN1"/>
<dbReference type="PhosphoSitePlus" id="Q9ESN1"/>
<dbReference type="PaxDb" id="10090-ENSMUSP00000025806"/>
<dbReference type="ProteomicsDB" id="277486"/>
<dbReference type="DNASU" id="60425"/>
<dbReference type="GeneID" id="60425"/>
<dbReference type="KEGG" id="mmu:60425"/>
<dbReference type="UCSC" id="uc008fyd.1">
    <property type="organism name" value="mouse"/>
</dbReference>
<dbReference type="AGR" id="MGI:1926250"/>
<dbReference type="CTD" id="60425"/>
<dbReference type="MGI" id="MGI:1926250">
    <property type="gene designation" value="Doc2g"/>
</dbReference>
<dbReference type="eggNOG" id="KOG1013">
    <property type="taxonomic scope" value="Eukaryota"/>
</dbReference>
<dbReference type="InParanoid" id="Q9ESN1"/>
<dbReference type="OrthoDB" id="10059918at2759"/>
<dbReference type="PhylomeDB" id="Q9ESN1"/>
<dbReference type="TreeFam" id="TF351844"/>
<dbReference type="BioGRID-ORCS" id="60425">
    <property type="hits" value="1 hit in 76 CRISPR screens"/>
</dbReference>
<dbReference type="ChiTaRS" id="Doc2g">
    <property type="organism name" value="mouse"/>
</dbReference>
<dbReference type="PRO" id="PR:Q9ESN1"/>
<dbReference type="Proteomes" id="UP000000589">
    <property type="component" value="Unplaced"/>
</dbReference>
<dbReference type="RNAct" id="Q9ESN1">
    <property type="molecule type" value="protein"/>
</dbReference>
<dbReference type="GO" id="GO:0016020">
    <property type="term" value="C:membrane"/>
    <property type="evidence" value="ECO:0007669"/>
    <property type="project" value="InterPro"/>
</dbReference>
<dbReference type="GO" id="GO:0098793">
    <property type="term" value="C:presynapse"/>
    <property type="evidence" value="ECO:0007669"/>
    <property type="project" value="GOC"/>
</dbReference>
<dbReference type="GO" id="GO:0046872">
    <property type="term" value="F:metal ion binding"/>
    <property type="evidence" value="ECO:0007669"/>
    <property type="project" value="UniProtKB-KW"/>
</dbReference>
<dbReference type="GO" id="GO:0061669">
    <property type="term" value="P:spontaneous neurotransmitter secretion"/>
    <property type="evidence" value="ECO:0000316"/>
    <property type="project" value="MGI"/>
</dbReference>
<dbReference type="CDD" id="cd04035">
    <property type="entry name" value="C2A_Rabphilin_Doc2"/>
    <property type="match status" value="1"/>
</dbReference>
<dbReference type="FunFam" id="2.60.40.150:FF:000032">
    <property type="entry name" value="Double c2-like domain-containing"/>
    <property type="match status" value="1"/>
</dbReference>
<dbReference type="FunFam" id="2.60.40.150:FF:000023">
    <property type="entry name" value="Double C2-like domain-containing protein"/>
    <property type="match status" value="1"/>
</dbReference>
<dbReference type="Gene3D" id="2.60.40.150">
    <property type="entry name" value="C2 domain"/>
    <property type="match status" value="2"/>
</dbReference>
<dbReference type="InterPro" id="IPR000008">
    <property type="entry name" value="C2_dom"/>
</dbReference>
<dbReference type="InterPro" id="IPR035892">
    <property type="entry name" value="C2_domain_sf"/>
</dbReference>
<dbReference type="InterPro" id="IPR014638">
    <property type="entry name" value="Doc2"/>
</dbReference>
<dbReference type="InterPro" id="IPR043566">
    <property type="entry name" value="Rabphilin/DOC2/Noc2"/>
</dbReference>
<dbReference type="InterPro" id="IPR047022">
    <property type="entry name" value="Rabphilin_Doc2_C2A"/>
</dbReference>
<dbReference type="InterPro" id="IPR001565">
    <property type="entry name" value="Synaptotagmin"/>
</dbReference>
<dbReference type="PANTHER" id="PTHR45729:SF7">
    <property type="entry name" value="DOUBLE C2-LIKE DOMAIN-CONTAINING PROTEIN GAMMA"/>
    <property type="match status" value="1"/>
</dbReference>
<dbReference type="PANTHER" id="PTHR45729">
    <property type="entry name" value="RABPHILIN, ISOFORM A"/>
    <property type="match status" value="1"/>
</dbReference>
<dbReference type="Pfam" id="PF00168">
    <property type="entry name" value="C2"/>
    <property type="match status" value="2"/>
</dbReference>
<dbReference type="PIRSF" id="PIRSF036931">
    <property type="entry name" value="Doc2"/>
    <property type="match status" value="1"/>
</dbReference>
<dbReference type="PRINTS" id="PR00360">
    <property type="entry name" value="C2DOMAIN"/>
</dbReference>
<dbReference type="PRINTS" id="PR00399">
    <property type="entry name" value="SYNAPTOTAGMN"/>
</dbReference>
<dbReference type="SMART" id="SM00239">
    <property type="entry name" value="C2"/>
    <property type="match status" value="2"/>
</dbReference>
<dbReference type="SUPFAM" id="SSF49562">
    <property type="entry name" value="C2 domain (Calcium/lipid-binding domain, CaLB)"/>
    <property type="match status" value="2"/>
</dbReference>
<dbReference type="PROSITE" id="PS50004">
    <property type="entry name" value="C2"/>
    <property type="match status" value="2"/>
</dbReference>
<name>DOC2G_MOUSE</name>
<accession>Q9ESN1</accession>
<accession>Q6P8R8</accession>